<organism>
    <name type="scientific">Homo sapiens</name>
    <name type="common">Human</name>
    <dbReference type="NCBI Taxonomy" id="9606"/>
    <lineage>
        <taxon>Eukaryota</taxon>
        <taxon>Metazoa</taxon>
        <taxon>Chordata</taxon>
        <taxon>Craniata</taxon>
        <taxon>Vertebrata</taxon>
        <taxon>Euteleostomi</taxon>
        <taxon>Mammalia</taxon>
        <taxon>Eutheria</taxon>
        <taxon>Euarchontoglires</taxon>
        <taxon>Primates</taxon>
        <taxon>Haplorrhini</taxon>
        <taxon>Catarrhini</taxon>
        <taxon>Hominidae</taxon>
        <taxon>Homo</taxon>
    </lineage>
</organism>
<sequence>MLSQKTKKKHNFLNHGLSLNLVIKPYLALEGSVAFPAENGVQDTESTLEKRETGDEENSAKFPIGRRDFDTLRCMLGRVYQRCWQV</sequence>
<reference key="1">
    <citation type="journal article" date="2001" name="Science">
        <title>Birth of two chimeric genes in the Hominidae lineage.</title>
        <authorList>
            <person name="Courseaux A."/>
            <person name="Nahon J.-L."/>
        </authorList>
    </citation>
    <scope>NUCLEOTIDE SEQUENCE [MRNA]</scope>
    <source>
        <tissue>Testis</tissue>
    </source>
</reference>
<reference key="2">
    <citation type="journal article" date="1994" name="Genomics">
        <title>Assignment of the human pro-melanin-concentrating hormone gene (PMCH) to chromosome 12q23-q24 and two variant genes (PMCHL1 and PMCHL2) to chromosome 5p14 and 5q12-q13.</title>
        <authorList>
            <person name="Pedeutour F."/>
            <person name="Szpirer C."/>
            <person name="Nahon J.-L."/>
        </authorList>
    </citation>
    <scope>NUCLEOTIDE SEQUENCE [GENOMIC DNA]</scope>
</reference>
<reference key="3">
    <citation type="journal article" date="2000" name="Mol. Biol. Evol.">
        <title>Structure and expression of the variant melanin-concentrating hormone genes: only PMCHL1 is transcribed in the developing human brain and encodes a putative protein.</title>
        <authorList>
            <person name="Viale A."/>
            <person name="Courseaux A."/>
            <person name="Presse F."/>
            <person name="Ortola C."/>
            <person name="Breton C."/>
            <person name="Jordan D."/>
            <person name="Nahon J.-L."/>
        </authorList>
    </citation>
    <scope>DEVELOPMENTAL STAGE</scope>
</reference>
<comment type="tissue specificity">
    <text>Expressed in testis but not in brain.</text>
</comment>
<comment type="developmental stage">
    <text evidence="2">Not expressed during brain development.</text>
</comment>
<comment type="similarity">
    <text evidence="3">Belongs to the melanin-concentrating hormone family.</text>
</comment>
<comment type="caution">
    <text evidence="3">Could be the product of a pseudogene.</text>
</comment>
<name>MCHL2_HUMAN</name>
<feature type="chain" id="PRO_0000158272" description="Putative pro-MCH-like protein 2">
    <location>
        <begin position="1"/>
        <end position="86"/>
    </location>
</feature>
<feature type="region of interest" description="NGE-like">
    <location>
        <begin position="31"/>
        <end position="49"/>
    </location>
</feature>
<feature type="region of interest" description="Disordered" evidence="1">
    <location>
        <begin position="40"/>
        <end position="60"/>
    </location>
</feature>
<feature type="region of interest" description="NEI-like">
    <location>
        <begin position="52"/>
        <end position="64"/>
    </location>
</feature>
<feature type="region of interest" description="Melanin-concentrating hormone-like">
    <location>
        <begin position="68"/>
        <end position="86"/>
    </location>
</feature>
<dbReference type="EMBL" id="AY008413">
    <property type="protein sequence ID" value="AAK31297.1"/>
    <property type="molecule type" value="mRNA"/>
</dbReference>
<dbReference type="EMBL" id="AY008412">
    <property type="protein sequence ID" value="AAK31296.1"/>
    <property type="molecule type" value="mRNA"/>
</dbReference>
<dbReference type="EMBL" id="AY028320">
    <property type="protein sequence ID" value="AAK31290.1"/>
    <property type="molecule type" value="Genomic_DNA"/>
</dbReference>
<dbReference type="BioMuta" id="HGNC:9111"/>
<dbReference type="DMDM" id="71153828"/>
<dbReference type="AGR" id="HGNC:9111"/>
<dbReference type="GeneCards" id="PMCHL2"/>
<dbReference type="HGNC" id="HGNC:9111">
    <property type="gene designation" value="PMCHL2"/>
</dbReference>
<dbReference type="MIM" id="176794">
    <property type="type" value="gene"/>
</dbReference>
<dbReference type="neXtProt" id="NX_Q9BQD1"/>
<dbReference type="InParanoid" id="Q9BQD1"/>
<dbReference type="PAN-GO" id="Q9BQD1">
    <property type="GO annotations" value="2 GO annotations based on evolutionary models"/>
</dbReference>
<dbReference type="PhylomeDB" id="Q9BQD1"/>
<dbReference type="PathwayCommons" id="Q9BQD1"/>
<dbReference type="Pharos" id="Q9BQD1">
    <property type="development level" value="Tdark"/>
</dbReference>
<dbReference type="PRO" id="PR:Q9BQD1"/>
<dbReference type="Proteomes" id="UP000005640">
    <property type="component" value="Unplaced"/>
</dbReference>
<dbReference type="RNAct" id="Q9BQD1">
    <property type="molecule type" value="protein"/>
</dbReference>
<dbReference type="GO" id="GO:0045202">
    <property type="term" value="C:synapse"/>
    <property type="evidence" value="ECO:0007669"/>
    <property type="project" value="GOC"/>
</dbReference>
<dbReference type="GO" id="GO:0030354">
    <property type="term" value="F:melanin-concentrating hormone activity"/>
    <property type="evidence" value="ECO:0007669"/>
    <property type="project" value="InterPro"/>
</dbReference>
<dbReference type="GO" id="GO:0031777">
    <property type="term" value="F:type 1 melanin-concentrating hormone receptor binding"/>
    <property type="evidence" value="ECO:0000318"/>
    <property type="project" value="GO_Central"/>
</dbReference>
<dbReference type="GO" id="GO:0007268">
    <property type="term" value="P:chemical synaptic transmission"/>
    <property type="evidence" value="ECO:0007669"/>
    <property type="project" value="InterPro"/>
</dbReference>
<dbReference type="GO" id="GO:0032227">
    <property type="term" value="P:negative regulation of synaptic transmission, dopaminergic"/>
    <property type="evidence" value="ECO:0000318"/>
    <property type="project" value="GO_Central"/>
</dbReference>
<dbReference type="InterPro" id="IPR005456">
    <property type="entry name" value="Prepro-melanin_conc_hormone"/>
</dbReference>
<dbReference type="PANTHER" id="PTHR12091">
    <property type="entry name" value="MELANIN-CONCENTRATING HORMONE"/>
    <property type="match status" value="1"/>
</dbReference>
<dbReference type="PANTHER" id="PTHR12091:SF1">
    <property type="entry name" value="PRO-MCH-LIKE PROTEIN 1-RELATED"/>
    <property type="match status" value="1"/>
</dbReference>
<dbReference type="Pfam" id="PF05824">
    <property type="entry name" value="Pro-MCH"/>
    <property type="match status" value="1"/>
</dbReference>
<dbReference type="PRINTS" id="PR01641">
    <property type="entry name" value="PROMCHFAMILY"/>
</dbReference>
<accession>Q9BQD1</accession>
<gene>
    <name type="primary">PMCHL2</name>
</gene>
<keyword id="KW-1185">Reference proteome</keyword>
<evidence type="ECO:0000256" key="1">
    <source>
        <dbReference type="SAM" id="MobiDB-lite"/>
    </source>
</evidence>
<evidence type="ECO:0000269" key="2">
    <source>
    </source>
</evidence>
<evidence type="ECO:0000305" key="3"/>
<proteinExistence type="uncertain"/>
<protein>
    <recommendedName>
        <fullName>Putative pro-MCH-like protein 2</fullName>
    </recommendedName>
    <alternativeName>
        <fullName>Pro-melanin-concentrating hormone-like protein 2</fullName>
    </alternativeName>
</protein>